<sequence>MRLTLGKGATVVYRARAGACATRRHGVRNLRIKAAPLGELTVVNGVNLPISSTPSSASSADAKFHVVGTPYSMLSVSLSASQNLYTRRGTLVGLSGKADNVISTLSVLEPLRRAVFGIPFLYQKISSPSPIKALVSVQSPVTSFAVVHLDGTVDWMIVQRRALLAWTGHSLNIKPRINRHLSVTNWGSSEVTGRGLLALVGRGQVYSIELKAGEQYIAHPSNVVAYTLASMPPQPYRFKSTTLRFQIPGLDIPELLLKSRYIRDFTASDTWKASMRIFHNVRTWARRTIWGDRLFLRFEGPATLLVQSRGARVRDIMSDREVNEIADTPAGTTFNAINKLTGVTKEDKSDYQRAAEEAVSQAPVPSRTVEGLTQELKGVSQAIAIIRDGRVEFETFKSQNDDARK</sequence>
<gene>
    <name type="primary">aim24</name>
    <name type="ORF">PMAA_080010</name>
</gene>
<protein>
    <recommendedName>
        <fullName>Altered inheritance of mitochondria protein 24, mitochondrial</fullName>
    </recommendedName>
</protein>
<comment type="subcellular location">
    <subcellularLocation>
        <location evidence="1">Mitochondrion</location>
    </subcellularLocation>
</comment>
<comment type="similarity">
    <text evidence="3">Belongs to the AIM24 family.</text>
</comment>
<organism>
    <name type="scientific">Talaromyces marneffei (strain ATCC 18224 / CBS 334.59 / QM 7333)</name>
    <name type="common">Penicillium marneffei</name>
    <dbReference type="NCBI Taxonomy" id="441960"/>
    <lineage>
        <taxon>Eukaryota</taxon>
        <taxon>Fungi</taxon>
        <taxon>Dikarya</taxon>
        <taxon>Ascomycota</taxon>
        <taxon>Pezizomycotina</taxon>
        <taxon>Eurotiomycetes</taxon>
        <taxon>Eurotiomycetidae</taxon>
        <taxon>Eurotiales</taxon>
        <taxon>Trichocomaceae</taxon>
        <taxon>Talaromyces</taxon>
        <taxon>Talaromyces sect. Talaromyces</taxon>
    </lineage>
</organism>
<feature type="transit peptide" description="Mitochondrion" evidence="2">
    <location>
        <begin position="1"/>
        <end position="88"/>
    </location>
</feature>
<feature type="chain" id="PRO_0000399585" description="Altered inheritance of mitochondria protein 24, mitochondrial">
    <location>
        <begin position="89"/>
        <end position="405"/>
    </location>
</feature>
<proteinExistence type="inferred from homology"/>
<accession>B6QEP5</accession>
<dbReference type="EMBL" id="DS995901">
    <property type="protein sequence ID" value="EEA23982.1"/>
    <property type="molecule type" value="Genomic_DNA"/>
</dbReference>
<dbReference type="RefSeq" id="XP_002147493.1">
    <property type="nucleotide sequence ID" value="XM_002147457.1"/>
</dbReference>
<dbReference type="SMR" id="B6QEP5"/>
<dbReference type="STRING" id="441960.B6QEP5"/>
<dbReference type="VEuPathDB" id="FungiDB:PMAA_080010"/>
<dbReference type="HOGENOM" id="CLU_046558_0_0_1"/>
<dbReference type="OrthoDB" id="4880at28568"/>
<dbReference type="PhylomeDB" id="B6QEP5"/>
<dbReference type="Proteomes" id="UP000001294">
    <property type="component" value="Unassembled WGS sequence"/>
</dbReference>
<dbReference type="GO" id="GO:0005743">
    <property type="term" value="C:mitochondrial inner membrane"/>
    <property type="evidence" value="ECO:0007669"/>
    <property type="project" value="TreeGrafter"/>
</dbReference>
<dbReference type="GO" id="GO:0007007">
    <property type="term" value="P:inner mitochondrial membrane organization"/>
    <property type="evidence" value="ECO:0007669"/>
    <property type="project" value="TreeGrafter"/>
</dbReference>
<dbReference type="FunFam" id="3.60.160.10:FF:000001">
    <property type="entry name" value="Altered inheritance of mitochondria protein 24, mitochondrial"/>
    <property type="match status" value="1"/>
</dbReference>
<dbReference type="Gene3D" id="3.60.160.10">
    <property type="entry name" value="Mitochondrial biogenesis AIM24"/>
    <property type="match status" value="1"/>
</dbReference>
<dbReference type="InterPro" id="IPR002838">
    <property type="entry name" value="AIM24"/>
</dbReference>
<dbReference type="InterPro" id="IPR036983">
    <property type="entry name" value="AIM24_sf"/>
</dbReference>
<dbReference type="InterPro" id="IPR016031">
    <property type="entry name" value="Trp_RNA-bd_attenuator-like_dom"/>
</dbReference>
<dbReference type="PANTHER" id="PTHR36959">
    <property type="entry name" value="ALTERED INHERITANCE OF MITOCHONDRIA PROTEIN 24, MITOCHONDRIAL"/>
    <property type="match status" value="1"/>
</dbReference>
<dbReference type="PANTHER" id="PTHR36959:SF2">
    <property type="entry name" value="ALTERED INHERITANCE OF MITOCHONDRIA PROTEIN 24, MITOCHONDRIAL"/>
    <property type="match status" value="1"/>
</dbReference>
<dbReference type="Pfam" id="PF01987">
    <property type="entry name" value="AIM24"/>
    <property type="match status" value="1"/>
</dbReference>
<dbReference type="SUPFAM" id="SSF51219">
    <property type="entry name" value="TRAP-like"/>
    <property type="match status" value="1"/>
</dbReference>
<reference key="1">
    <citation type="journal article" date="2015" name="Genome Announc.">
        <title>Genome sequence of the AIDS-associated pathogen Penicillium marneffei (ATCC18224) and its near taxonomic relative Talaromyces stipitatus (ATCC10500).</title>
        <authorList>
            <person name="Nierman W.C."/>
            <person name="Fedorova-Abrams N.D."/>
            <person name="Andrianopoulos A."/>
        </authorList>
    </citation>
    <scope>NUCLEOTIDE SEQUENCE [LARGE SCALE GENOMIC DNA]</scope>
    <source>
        <strain>ATCC 18224 / CBS 334.59 / QM 7333</strain>
    </source>
</reference>
<evidence type="ECO:0000250" key="1"/>
<evidence type="ECO:0000255" key="2"/>
<evidence type="ECO:0000305" key="3"/>
<keyword id="KW-0496">Mitochondrion</keyword>
<keyword id="KW-1185">Reference proteome</keyword>
<keyword id="KW-0809">Transit peptide</keyword>
<name>AIM24_TALMQ</name>